<evidence type="ECO:0000255" key="1"/>
<evidence type="ECO:0000255" key="2">
    <source>
        <dbReference type="PROSITE-ProRule" id="PRU00817"/>
    </source>
</evidence>
<evidence type="ECO:0000305" key="3"/>
<gene>
    <name type="primary">rliB</name>
    <name type="ORF">DDB_G0278243</name>
</gene>
<sequence length="1117" mass="124099">MKNINNKILKIFILFLAICSVKSDTCPTDSNWRPTPASSNSPVSPALPTTSLASDIVYGGNDLYYMAYWSMTDPNNLQPVSDVESEFSIALPAWAPDYFLIVAKQSAPALKANTNYQFSFDFKLGQVLTQGITYSNMTLSFYKPGDIDYLLWSYRAPMYSFTFTGDFSSTTYKSKTITFSVPVDLGLSTLILQVNRSRAMDYDDTTIFYKNMKITVPSKPVVAPPNLITKDSELINIPKASVSLDPQDLSTCPYLASDLVHWHNPSTWSNNLVPQPNENITIPAGKRVLISPCSISQTAIYQRIVIPATSELIFADSNLTMNVKDILVQGKFIMGTTKCRYNANINIIFHGSKTKVDTIAPFYGSKGIAVSAGGFISVHGKQYHNSWTKLASTVWSGDRIIYVQDNINWEVGQQVLITTSQFKDEIDNQNEVLTIKSILGKAIEFTTPIKFYHYGGKEYQAEVALLSRRIIFQGNDESDQDSFGGHVLVSGEGQFAGIQLKKMGQRNVKARYPLHFHLANVVQKSYISDCVVTKSYYRCYTIHGTNNLTLTRNVAFDVNGHCYYLEDGVEMDNTLSYNLAAFVHTIGEPAAGGAQTGETYYENENLTQPADSAAGGFYITNAYNTIIGNSASGGWAGFSFPNLEKPIGNHKNVEMEPQAFTTKVFEGNTAHSSGYQWISGSSIYVGGKLITDEVTGLLVYNTGRHSRPTCKDGIFSYDSSTYLWMRFNNTKVYLSNLGLGHWGDRVEVVGLEAYDSMRPASLFGAAWLSNAIVDGTGNILSKSQSYNRQGFQFYDTYVTTILSHITFRNFIQNPTSVYPDDDNVVIIALTFSDLYKPQFISSTINITLENILPAQIIGHKIVPDSGSSRFFNFIDWDGSLVGTHVPTIVGSHEKWWSYDDSKCTYNNDWTIWVCQKGSKSVGNIEFWVPNLIIRGEQNEGDSFVGSVSLFGDGITDVRKTAITRNAGITGITSTGWMLWLDGGSPTYLQVWAAQVAYQQYIFLAIPYPPGTTFTISTENKWAWQNAYGFNCTLASSAAEVRSSNGTKYYFDQTHLFVKIVNPVLTGSPAESFNRGGAKIDDVYWEYIYHINATNPNVSPNQDGFYTNLSYTLPSSTL</sequence>
<organism>
    <name type="scientific">Dictyostelium discoideum</name>
    <name type="common">Social amoeba</name>
    <dbReference type="NCBI Taxonomy" id="44689"/>
    <lineage>
        <taxon>Eukaryota</taxon>
        <taxon>Amoebozoa</taxon>
        <taxon>Evosea</taxon>
        <taxon>Eumycetozoa</taxon>
        <taxon>Dictyostelia</taxon>
        <taxon>Dictyosteliales</taxon>
        <taxon>Dictyosteliaceae</taxon>
        <taxon>Dictyostelium</taxon>
    </lineage>
</organism>
<reference key="1">
    <citation type="journal article" date="2005" name="Nature">
        <title>The genome of the social amoeba Dictyostelium discoideum.</title>
        <authorList>
            <person name="Eichinger L."/>
            <person name="Pachebat J.A."/>
            <person name="Gloeckner G."/>
            <person name="Rajandream M.A."/>
            <person name="Sucgang R."/>
            <person name="Berriman M."/>
            <person name="Song J."/>
            <person name="Olsen R."/>
            <person name="Szafranski K."/>
            <person name="Xu Q."/>
            <person name="Tunggal B."/>
            <person name="Kummerfeld S."/>
            <person name="Madera M."/>
            <person name="Konfortov B.A."/>
            <person name="Rivero F."/>
            <person name="Bankier A.T."/>
            <person name="Lehmann R."/>
            <person name="Hamlin N."/>
            <person name="Davies R."/>
            <person name="Gaudet P."/>
            <person name="Fey P."/>
            <person name="Pilcher K."/>
            <person name="Chen G."/>
            <person name="Saunders D."/>
            <person name="Sodergren E.J."/>
            <person name="Davis P."/>
            <person name="Kerhornou A."/>
            <person name="Nie X."/>
            <person name="Hall N."/>
            <person name="Anjard C."/>
            <person name="Hemphill L."/>
            <person name="Bason N."/>
            <person name="Farbrother P."/>
            <person name="Desany B."/>
            <person name="Just E."/>
            <person name="Morio T."/>
            <person name="Rost R."/>
            <person name="Churcher C.M."/>
            <person name="Cooper J."/>
            <person name="Haydock S."/>
            <person name="van Driessche N."/>
            <person name="Cronin A."/>
            <person name="Goodhead I."/>
            <person name="Muzny D.M."/>
            <person name="Mourier T."/>
            <person name="Pain A."/>
            <person name="Lu M."/>
            <person name="Harper D."/>
            <person name="Lindsay R."/>
            <person name="Hauser H."/>
            <person name="James K.D."/>
            <person name="Quiles M."/>
            <person name="Madan Babu M."/>
            <person name="Saito T."/>
            <person name="Buchrieser C."/>
            <person name="Wardroper A."/>
            <person name="Felder M."/>
            <person name="Thangavelu M."/>
            <person name="Johnson D."/>
            <person name="Knights A."/>
            <person name="Loulseged H."/>
            <person name="Mungall K.L."/>
            <person name="Oliver K."/>
            <person name="Price C."/>
            <person name="Quail M.A."/>
            <person name="Urushihara H."/>
            <person name="Hernandez J."/>
            <person name="Rabbinowitsch E."/>
            <person name="Steffen D."/>
            <person name="Sanders M."/>
            <person name="Ma J."/>
            <person name="Kohara Y."/>
            <person name="Sharp S."/>
            <person name="Simmonds M.N."/>
            <person name="Spiegler S."/>
            <person name="Tivey A."/>
            <person name="Sugano S."/>
            <person name="White B."/>
            <person name="Walker D."/>
            <person name="Woodward J.R."/>
            <person name="Winckler T."/>
            <person name="Tanaka Y."/>
            <person name="Shaulsky G."/>
            <person name="Schleicher M."/>
            <person name="Weinstock G.M."/>
            <person name="Rosenthal A."/>
            <person name="Cox E.C."/>
            <person name="Chisholm R.L."/>
            <person name="Gibbs R.A."/>
            <person name="Loomis W.F."/>
            <person name="Platzer M."/>
            <person name="Kay R.R."/>
            <person name="Williams J.G."/>
            <person name="Dear P.H."/>
            <person name="Noegel A.A."/>
            <person name="Barrell B.G."/>
            <person name="Kuspa A."/>
        </authorList>
    </citation>
    <scope>NUCLEOTIDE SEQUENCE [LARGE SCALE GENOMIC DNA]</scope>
    <source>
        <strain>AX4</strain>
    </source>
</reference>
<protein>
    <recommendedName>
        <fullName>Protein rliB</fullName>
    </recommendedName>
    <alternativeName>
        <fullName>Repressed after Legionella infection protein B</fullName>
    </alternativeName>
</protein>
<proteinExistence type="inferred from homology"/>
<dbReference type="EMBL" id="AAFI02000023">
    <property type="protein sequence ID" value="EAL68294.2"/>
    <property type="molecule type" value="Genomic_DNA"/>
</dbReference>
<dbReference type="RefSeq" id="XP_642234.2">
    <property type="nucleotide sequence ID" value="XM_637142.2"/>
</dbReference>
<dbReference type="SMR" id="Q54YG8"/>
<dbReference type="GlyCosmos" id="Q54YG8">
    <property type="glycosylation" value="12 sites, No reported glycans"/>
</dbReference>
<dbReference type="GlyGen" id="Q54YG8">
    <property type="glycosylation" value="13 sites"/>
</dbReference>
<dbReference type="PaxDb" id="44689-DDB0252586"/>
<dbReference type="GeneID" id="8621442"/>
<dbReference type="KEGG" id="ddi:DDB_G0278243"/>
<dbReference type="dictyBase" id="DDB_G0278243">
    <property type="gene designation" value="rliB"/>
</dbReference>
<dbReference type="VEuPathDB" id="AmoebaDB:DDB_G0278243"/>
<dbReference type="HOGENOM" id="CLU_005143_0_0_1"/>
<dbReference type="InParanoid" id="Q54YG8"/>
<dbReference type="OMA" id="WAWQNAY"/>
<dbReference type="PhylomeDB" id="Q54YG8"/>
<dbReference type="PRO" id="PR:Q54YG8"/>
<dbReference type="Proteomes" id="UP000002195">
    <property type="component" value="Chromosome 3"/>
</dbReference>
<dbReference type="GO" id="GO:0005576">
    <property type="term" value="C:extracellular region"/>
    <property type="evidence" value="ECO:0007669"/>
    <property type="project" value="UniProtKB-SubCell"/>
</dbReference>
<dbReference type="InterPro" id="IPR055401">
    <property type="entry name" value="CEMIP_beta-hel_dom"/>
</dbReference>
<dbReference type="InterPro" id="IPR019316">
    <property type="entry name" value="G8_domain"/>
</dbReference>
<dbReference type="InterPro" id="IPR052334">
    <property type="entry name" value="G8_domain-comF-like"/>
</dbReference>
<dbReference type="PANTHER" id="PTHR47687:SF6">
    <property type="entry name" value="COMMUNICATION MUTANT PROTEIN F-RELATED"/>
    <property type="match status" value="1"/>
</dbReference>
<dbReference type="PANTHER" id="PTHR47687">
    <property type="entry name" value="G8 DOMAIN-CONTAINING PROTEIN DDB_G0288475-RELATED"/>
    <property type="match status" value="1"/>
</dbReference>
<dbReference type="Pfam" id="PF24606">
    <property type="entry name" value="CEMIP_beta-hel"/>
    <property type="match status" value="1"/>
</dbReference>
<dbReference type="Pfam" id="PF10162">
    <property type="entry name" value="G8"/>
    <property type="match status" value="1"/>
</dbReference>
<dbReference type="SMART" id="SM01225">
    <property type="entry name" value="G8"/>
    <property type="match status" value="1"/>
</dbReference>
<dbReference type="PROSITE" id="PS51484">
    <property type="entry name" value="G8"/>
    <property type="match status" value="1"/>
</dbReference>
<comment type="subcellular location">
    <subcellularLocation>
        <location evidence="3">Secreted</location>
    </subcellularLocation>
</comment>
<comment type="similarity">
    <text evidence="3">Belongs to the comF family.</text>
</comment>
<name>RLIB_DICDI</name>
<feature type="signal peptide" evidence="1">
    <location>
        <begin position="1"/>
        <end position="23"/>
    </location>
</feature>
<feature type="chain" id="PRO_0000393590" description="Protein rliB">
    <location>
        <begin position="24"/>
        <end position="1117"/>
    </location>
</feature>
<feature type="domain" description="G8" evidence="2">
    <location>
        <begin position="266"/>
        <end position="392"/>
    </location>
</feature>
<feature type="repeat" description="PbH1 1">
    <location>
        <begin position="522"/>
        <end position="544"/>
    </location>
</feature>
<feature type="repeat" description="PbH1 2">
    <location>
        <begin position="545"/>
        <end position="567"/>
    </location>
</feature>
<feature type="repeat" description="PbH1 3">
    <location>
        <begin position="621"/>
        <end position="642"/>
    </location>
</feature>
<feature type="glycosylation site" description="N-linked (GlcNAc...) asparagine" evidence="1">
    <location>
        <position position="136"/>
    </location>
</feature>
<feature type="glycosylation site" description="N-linked (GlcNAc...) asparagine" evidence="1">
    <location>
        <position position="195"/>
    </location>
</feature>
<feature type="glycosylation site" description="N-linked (GlcNAc...) asparagine" evidence="1">
    <location>
        <position position="279"/>
    </location>
</feature>
<feature type="glycosylation site" description="N-linked (GlcNAc...) asparagine" evidence="1">
    <location>
        <position position="318"/>
    </location>
</feature>
<feature type="glycosylation site" description="N-linked (GlcNAc...) asparagine" evidence="1">
    <location>
        <position position="547"/>
    </location>
</feature>
<feature type="glycosylation site" description="N-linked (GlcNAc...) asparagine" evidence="1">
    <location>
        <position position="605"/>
    </location>
</feature>
<feature type="glycosylation site" description="N-linked (GlcNAc...) asparagine" evidence="1">
    <location>
        <position position="728"/>
    </location>
</feature>
<feature type="glycosylation site" description="N-linked (GlcNAc...) asparagine" evidence="1">
    <location>
        <position position="845"/>
    </location>
</feature>
<feature type="glycosylation site" description="N-linked (GlcNAc...) asparagine" evidence="1">
    <location>
        <position position="1030"/>
    </location>
</feature>
<feature type="glycosylation site" description="N-linked (GlcNAc...) asparagine" evidence="1">
    <location>
        <position position="1044"/>
    </location>
</feature>
<feature type="glycosylation site" description="N-linked (GlcNAc...) asparagine" evidence="1">
    <location>
        <position position="1091"/>
    </location>
</feature>
<feature type="glycosylation site" description="N-linked (GlcNAc...) asparagine" evidence="1">
    <location>
        <position position="1107"/>
    </location>
</feature>
<keyword id="KW-0325">Glycoprotein</keyword>
<keyword id="KW-1185">Reference proteome</keyword>
<keyword id="KW-0677">Repeat</keyword>
<keyword id="KW-0964">Secreted</keyword>
<keyword id="KW-0732">Signal</keyword>
<accession>Q54YG8</accession>